<evidence type="ECO:0000250" key="1">
    <source>
        <dbReference type="UniProtKB" id="Q13627"/>
    </source>
</evidence>
<evidence type="ECO:0000250" key="2">
    <source>
        <dbReference type="UniProtKB" id="Q61214"/>
    </source>
</evidence>
<evidence type="ECO:0000250" key="3">
    <source>
        <dbReference type="UniProtKB" id="Q63470"/>
    </source>
</evidence>
<evidence type="ECO:0000255" key="4"/>
<evidence type="ECO:0000255" key="5">
    <source>
        <dbReference type="PROSITE-ProRule" id="PRU00159"/>
    </source>
</evidence>
<evidence type="ECO:0000255" key="6">
    <source>
        <dbReference type="PROSITE-ProRule" id="PRU10027"/>
    </source>
</evidence>
<evidence type="ECO:0000256" key="7">
    <source>
        <dbReference type="SAM" id="MobiDB-lite"/>
    </source>
</evidence>
<evidence type="ECO:0000269" key="8">
    <source>
    </source>
</evidence>
<evidence type="ECO:0000305" key="9"/>
<evidence type="ECO:0000312" key="10">
    <source>
        <dbReference type="EMBL" id="AAI10969.1"/>
    </source>
</evidence>
<reference evidence="10" key="1">
    <citation type="submission" date="2005-12" db="EMBL/GenBank/DDBJ databases">
        <authorList>
            <consortium name="NIH - Xenopus Gene Collection (XGC) project"/>
        </authorList>
    </citation>
    <scope>NUCLEOTIDE SEQUENCE [LARGE SCALE MRNA]</scope>
    <source>
        <tissue evidence="10">Embryo</tissue>
    </source>
</reference>
<reference evidence="9" key="2">
    <citation type="journal article" date="2006" name="Front. Biosci.">
        <title>Two dual specificity kinases are preferentially induced by wild-type rather than by oncogenic RAS-P21 in Xenopus oocytes.</title>
        <authorList>
            <person name="Qu Y."/>
            <person name="Adler V."/>
            <person name="Chu T."/>
            <person name="Platica O."/>
            <person name="Michl J."/>
            <person name="Pestka S."/>
            <person name="Izotova L."/>
            <person name="Boutjdir M."/>
            <person name="Pincus M.R."/>
        </authorList>
    </citation>
    <scope>INDUCTION</scope>
</reference>
<feature type="chain" id="PRO_0000284707" description="Dual specificity tyrosine-phosphorylation-regulated kinase 1A">
    <location>
        <begin position="1"/>
        <end position="750"/>
    </location>
</feature>
<feature type="domain" description="Protein kinase" evidence="5">
    <location>
        <begin position="151"/>
        <end position="471"/>
    </location>
</feature>
<feature type="region of interest" description="Disordered" evidence="7">
    <location>
        <begin position="56"/>
        <end position="81"/>
    </location>
</feature>
<feature type="region of interest" description="Disordered" evidence="7">
    <location>
        <begin position="104"/>
        <end position="129"/>
    </location>
</feature>
<feature type="region of interest" description="Disordered" evidence="7">
    <location>
        <begin position="400"/>
        <end position="434"/>
    </location>
</feature>
<feature type="region of interest" description="Disordered" evidence="7">
    <location>
        <begin position="477"/>
        <end position="531"/>
    </location>
</feature>
<feature type="region of interest" description="Disordered" evidence="7">
    <location>
        <begin position="583"/>
        <end position="666"/>
    </location>
</feature>
<feature type="region of interest" description="Histidine-rich domain (HRD)" evidence="1">
    <location>
        <begin position="584"/>
        <end position="612"/>
    </location>
</feature>
<feature type="region of interest" description="Disordered" evidence="7">
    <location>
        <begin position="731"/>
        <end position="750"/>
    </location>
</feature>
<feature type="short sequence motif" description="Bipartite nuclear localization signal" evidence="4">
    <location>
        <begin position="109"/>
        <end position="126"/>
    </location>
</feature>
<feature type="compositionally biased region" description="Polar residues" evidence="7">
    <location>
        <begin position="477"/>
        <end position="493"/>
    </location>
</feature>
<feature type="compositionally biased region" description="Low complexity" evidence="7">
    <location>
        <begin position="494"/>
        <end position="517"/>
    </location>
</feature>
<feature type="compositionally biased region" description="Basic residues" evidence="7">
    <location>
        <begin position="587"/>
        <end position="608"/>
    </location>
</feature>
<feature type="compositionally biased region" description="Polar residues" evidence="7">
    <location>
        <begin position="610"/>
        <end position="621"/>
    </location>
</feature>
<feature type="compositionally biased region" description="Low complexity" evidence="7">
    <location>
        <begin position="622"/>
        <end position="659"/>
    </location>
</feature>
<feature type="compositionally biased region" description="Polar residues" evidence="7">
    <location>
        <begin position="741"/>
        <end position="750"/>
    </location>
</feature>
<feature type="active site" description="Proton acceptor" evidence="5 6">
    <location>
        <position position="279"/>
    </location>
</feature>
<feature type="binding site" evidence="5">
    <location>
        <begin position="157"/>
        <end position="165"/>
    </location>
    <ligand>
        <name>ATP</name>
        <dbReference type="ChEBI" id="CHEBI:30616"/>
    </ligand>
</feature>
<feature type="binding site" evidence="5">
    <location>
        <position position="180"/>
    </location>
    <ligand>
        <name>ATP</name>
        <dbReference type="ChEBI" id="CHEBI:30616"/>
    </ligand>
</feature>
<feature type="binding site" evidence="5">
    <location>
        <begin position="230"/>
        <end position="233"/>
    </location>
    <ligand>
        <name>ATP</name>
        <dbReference type="ChEBI" id="CHEBI:30616"/>
    </ligand>
</feature>
<sequence length="750" mass="84157">MHTGGETSACKPSSVRLAPSFSFHAAGLQMAGQMSHSHQQYSDRHQQNLNDQQASALPYNDQTPQPLPNQRRMPQTFRDPATAPLRKLSVDLIKTYKHINEVYYAKKKRRHQQGQGDDSSHKKERKVYNDGYDDDNYDYIVKNGEKWMDRYEIDSLIGKGSFGQVVKAYDRVEQEWVAIKIIKNKKAFLNQAQIEVRLLELMNKHDTEMKYYIVHLKRHFMFRNHLCLVFEMLSYNLYDLLRNTNFRGVSLNLTRKFAQQMCTALLFLATPELSIIHCDLKPENILLCNPKRSAIKIVDFGSSCQLGQRIYQYIQSRFYRSPEVLLGTPYDLAIDMWSLGCILVEMHTGEPLFSGANEVDQMSKIVEVLGIPPAHILDQAPKARKFFEKMPEGTWNLKKTKDGKKEYKPPGTRKLHNILGVENGGPGGRRAGESGHTVADYLKFKDVILRMLDYDAKTRIQPYYALQHSFFKKTADEGTNTSNSVSTSPAMEQSQSSGTTSSTSSSSGGSSGTSNSGRARSDPTHQHRHSGGHFTTAVAMDCETHSPQVRQQFPPGWTVPEAPTQVTIETHPVQETTFHVPPSQKNVPHHHGNGSHHHHHHHHHHHGQHILSNRTRTRIYNSPSTSSSTQDSMDIGNSHHSMTSLSSSTTSSSTSSSSTGNQGNQAYQNRPVAANTLDFGQNGTLDVNLTVYSNPRQETGITGHPDYQYSANTGPGHYVTEGQLTMRQGIDREDSPMTGVCVQQSPVASS</sequence>
<name>DYR1A_XENLA</name>
<keyword id="KW-0067">ATP-binding</keyword>
<keyword id="KW-0418">Kinase</keyword>
<keyword id="KW-0547">Nucleotide-binding</keyword>
<keyword id="KW-0539">Nucleus</keyword>
<keyword id="KW-0597">Phosphoprotein</keyword>
<keyword id="KW-1185">Reference proteome</keyword>
<keyword id="KW-0723">Serine/threonine-protein kinase</keyword>
<keyword id="KW-0804">Transcription</keyword>
<keyword id="KW-0805">Transcription regulation</keyword>
<keyword id="KW-0808">Transferase</keyword>
<keyword id="KW-0829">Tyrosine-protein kinase</keyword>
<accession>Q2TAE3</accession>
<organism>
    <name type="scientific">Xenopus laevis</name>
    <name type="common">African clawed frog</name>
    <dbReference type="NCBI Taxonomy" id="8355"/>
    <lineage>
        <taxon>Eukaryota</taxon>
        <taxon>Metazoa</taxon>
        <taxon>Chordata</taxon>
        <taxon>Craniata</taxon>
        <taxon>Vertebrata</taxon>
        <taxon>Euteleostomi</taxon>
        <taxon>Amphibia</taxon>
        <taxon>Batrachia</taxon>
        <taxon>Anura</taxon>
        <taxon>Pipoidea</taxon>
        <taxon>Pipidae</taxon>
        <taxon>Xenopodinae</taxon>
        <taxon>Xenopus</taxon>
        <taxon>Xenopus</taxon>
    </lineage>
</organism>
<dbReference type="EC" id="2.7.11.23" evidence="1"/>
<dbReference type="EC" id="2.7.12.1"/>
<dbReference type="EMBL" id="BC110968">
    <property type="protein sequence ID" value="AAI10969.1"/>
    <property type="molecule type" value="mRNA"/>
</dbReference>
<dbReference type="SMR" id="Q2TAE3"/>
<dbReference type="DNASU" id="446302"/>
<dbReference type="KEGG" id="xla:446302"/>
<dbReference type="AGR" id="Xenbase:XB-GENE-1017110"/>
<dbReference type="CTD" id="446302"/>
<dbReference type="Xenbase" id="XB-GENE-1017110">
    <property type="gene designation" value="dyrk1a.S"/>
</dbReference>
<dbReference type="OrthoDB" id="9332038at2759"/>
<dbReference type="Proteomes" id="UP000186698">
    <property type="component" value="Chromosome 2S"/>
</dbReference>
<dbReference type="Bgee" id="446302">
    <property type="expression patterns" value="Expressed in muscle tissue and 19 other cell types or tissues"/>
</dbReference>
<dbReference type="GO" id="GO:0016607">
    <property type="term" value="C:nuclear speck"/>
    <property type="evidence" value="ECO:0000250"/>
    <property type="project" value="UniProtKB"/>
</dbReference>
<dbReference type="GO" id="GO:0005634">
    <property type="term" value="C:nucleus"/>
    <property type="evidence" value="ECO:0000250"/>
    <property type="project" value="UniProtKB"/>
</dbReference>
<dbReference type="GO" id="GO:0005524">
    <property type="term" value="F:ATP binding"/>
    <property type="evidence" value="ECO:0007669"/>
    <property type="project" value="UniProtKB-KW"/>
</dbReference>
<dbReference type="GO" id="GO:0106310">
    <property type="term" value="F:protein serine kinase activity"/>
    <property type="evidence" value="ECO:0007669"/>
    <property type="project" value="RHEA"/>
</dbReference>
<dbReference type="GO" id="GO:0004674">
    <property type="term" value="F:protein serine/threonine kinase activity"/>
    <property type="evidence" value="ECO:0000250"/>
    <property type="project" value="UniProtKB"/>
</dbReference>
<dbReference type="GO" id="GO:0004712">
    <property type="term" value="F:protein serine/threonine/tyrosine kinase activity"/>
    <property type="evidence" value="ECO:0007669"/>
    <property type="project" value="UniProtKB-EC"/>
</dbReference>
<dbReference type="GO" id="GO:0004713">
    <property type="term" value="F:protein tyrosine kinase activity"/>
    <property type="evidence" value="ECO:0000250"/>
    <property type="project" value="UniProtKB"/>
</dbReference>
<dbReference type="GO" id="GO:0008353">
    <property type="term" value="F:RNA polymerase II CTD heptapeptide repeat kinase activity"/>
    <property type="evidence" value="ECO:0000250"/>
    <property type="project" value="UniProtKB"/>
</dbReference>
<dbReference type="GO" id="GO:0003713">
    <property type="term" value="F:transcription coactivator activity"/>
    <property type="evidence" value="ECO:0000318"/>
    <property type="project" value="GO_Central"/>
</dbReference>
<dbReference type="GO" id="GO:0018108">
    <property type="term" value="P:peptidyl-tyrosine phosphorylation"/>
    <property type="evidence" value="ECO:0000250"/>
    <property type="project" value="UniProtKB"/>
</dbReference>
<dbReference type="GO" id="GO:0045893">
    <property type="term" value="P:positive regulation of DNA-templated transcription"/>
    <property type="evidence" value="ECO:0000318"/>
    <property type="project" value="GO_Central"/>
</dbReference>
<dbReference type="GO" id="GO:0033120">
    <property type="term" value="P:positive regulation of RNA splicing"/>
    <property type="evidence" value="ECO:0000318"/>
    <property type="project" value="GO_Central"/>
</dbReference>
<dbReference type="GO" id="GO:0046777">
    <property type="term" value="P:protein autophosphorylation"/>
    <property type="evidence" value="ECO:0000250"/>
    <property type="project" value="UniProtKB"/>
</dbReference>
<dbReference type="GO" id="GO:0006468">
    <property type="term" value="P:protein phosphorylation"/>
    <property type="evidence" value="ECO:0000250"/>
    <property type="project" value="UniProtKB"/>
</dbReference>
<dbReference type="CDD" id="cd14226">
    <property type="entry name" value="PKc_DYRK1"/>
    <property type="match status" value="1"/>
</dbReference>
<dbReference type="FunFam" id="3.30.200.20:FF:000087">
    <property type="entry name" value="Dual specificity tyrosine-phosphorylation-regulated kinase 1A"/>
    <property type="match status" value="1"/>
</dbReference>
<dbReference type="FunFam" id="1.10.510.10:FF:000264">
    <property type="entry name" value="dual specificity tyrosine-phosphorylation-regulated kinase 1B isoform X3"/>
    <property type="match status" value="1"/>
</dbReference>
<dbReference type="Gene3D" id="3.30.200.20">
    <property type="entry name" value="Phosphorylase Kinase, domain 1"/>
    <property type="match status" value="1"/>
</dbReference>
<dbReference type="Gene3D" id="1.10.510.10">
    <property type="entry name" value="Transferase(Phosphotransferase) domain 1"/>
    <property type="match status" value="1"/>
</dbReference>
<dbReference type="InterPro" id="IPR011009">
    <property type="entry name" value="Kinase-like_dom_sf"/>
</dbReference>
<dbReference type="InterPro" id="IPR044131">
    <property type="entry name" value="PKc_DYR1A/1B"/>
</dbReference>
<dbReference type="InterPro" id="IPR000719">
    <property type="entry name" value="Prot_kinase_dom"/>
</dbReference>
<dbReference type="InterPro" id="IPR017441">
    <property type="entry name" value="Protein_kinase_ATP_BS"/>
</dbReference>
<dbReference type="InterPro" id="IPR008271">
    <property type="entry name" value="Ser/Thr_kinase_AS"/>
</dbReference>
<dbReference type="InterPro" id="IPR050494">
    <property type="entry name" value="Ser_Thr_dual-spec_kinase"/>
</dbReference>
<dbReference type="PANTHER" id="PTHR24058">
    <property type="entry name" value="DUAL SPECIFICITY PROTEIN KINASE"/>
    <property type="match status" value="1"/>
</dbReference>
<dbReference type="PANTHER" id="PTHR24058:SF121">
    <property type="entry name" value="DUAL SPECIFICITY TYROSINE-PHOSPHORYLATION-REGULATED KINASE 1A"/>
    <property type="match status" value="1"/>
</dbReference>
<dbReference type="Pfam" id="PF00069">
    <property type="entry name" value="Pkinase"/>
    <property type="match status" value="1"/>
</dbReference>
<dbReference type="SMART" id="SM00220">
    <property type="entry name" value="S_TKc"/>
    <property type="match status" value="1"/>
</dbReference>
<dbReference type="SUPFAM" id="SSF56112">
    <property type="entry name" value="Protein kinase-like (PK-like)"/>
    <property type="match status" value="1"/>
</dbReference>
<dbReference type="PROSITE" id="PS00107">
    <property type="entry name" value="PROTEIN_KINASE_ATP"/>
    <property type="match status" value="1"/>
</dbReference>
<dbReference type="PROSITE" id="PS50011">
    <property type="entry name" value="PROTEIN_KINASE_DOM"/>
    <property type="match status" value="1"/>
</dbReference>
<dbReference type="PROSITE" id="PS00108">
    <property type="entry name" value="PROTEIN_KINASE_ST"/>
    <property type="match status" value="1"/>
</dbReference>
<gene>
    <name evidence="1" type="primary">dyrk1a</name>
</gene>
<proteinExistence type="evidence at transcript level"/>
<protein>
    <recommendedName>
        <fullName>Dual specificity tyrosine-phosphorylation-regulated kinase 1A</fullName>
        <ecNumber evidence="1">2.7.11.23</ecNumber>
        <ecNumber>2.7.12.1</ecNumber>
    </recommendedName>
    <alternativeName>
        <fullName>Protein kinase minibrain homolog</fullName>
    </alternativeName>
</protein>
<comment type="function">
    <text evidence="1 2 3">Dual-specificity kinase which possesses both serine/threonine and tyrosine kinase activities. Exhibits a substrate preference for proline at position P+1 and arginine at position P-3. Plays an important role in double-strand breaks (DSBs) repair following DNA damage. Mechanistically, phosphorylates RNF169 and increases its ability to block accumulation of TP53BP1 at the DSB sites thereby promoting homologous recombination repair (HRR). Also acts as a positive regulator of transcription by acting as a CTD kinase that mediates phosphorylation of the CTD (C-terminal domain) of the large subunit of RNA polymerase II (RNAP II) POLR2A (By similarity). Modulates alternative splicing by phosphorylating the splice factor SRSF6 (By similarity). Phosphorylates SEPTIN4, SEPTIN5 and SF3B1 (By similarity).</text>
</comment>
<comment type="catalytic activity">
    <reaction evidence="1">
        <text>L-seryl-[protein] + ATP = O-phospho-L-seryl-[protein] + ADP + H(+)</text>
        <dbReference type="Rhea" id="RHEA:17989"/>
        <dbReference type="Rhea" id="RHEA-COMP:9863"/>
        <dbReference type="Rhea" id="RHEA-COMP:11604"/>
        <dbReference type="ChEBI" id="CHEBI:15378"/>
        <dbReference type="ChEBI" id="CHEBI:29999"/>
        <dbReference type="ChEBI" id="CHEBI:30616"/>
        <dbReference type="ChEBI" id="CHEBI:83421"/>
        <dbReference type="ChEBI" id="CHEBI:456216"/>
        <dbReference type="EC" id="2.7.12.1"/>
    </reaction>
</comment>
<comment type="catalytic activity">
    <reaction evidence="1">
        <text>L-threonyl-[protein] + ATP = O-phospho-L-threonyl-[protein] + ADP + H(+)</text>
        <dbReference type="Rhea" id="RHEA:46608"/>
        <dbReference type="Rhea" id="RHEA-COMP:11060"/>
        <dbReference type="Rhea" id="RHEA-COMP:11605"/>
        <dbReference type="ChEBI" id="CHEBI:15378"/>
        <dbReference type="ChEBI" id="CHEBI:30013"/>
        <dbReference type="ChEBI" id="CHEBI:30616"/>
        <dbReference type="ChEBI" id="CHEBI:61977"/>
        <dbReference type="ChEBI" id="CHEBI:456216"/>
        <dbReference type="EC" id="2.7.12.1"/>
    </reaction>
</comment>
<comment type="catalytic activity">
    <reaction evidence="1">
        <text>L-tyrosyl-[protein] + ATP = O-phospho-L-tyrosyl-[protein] + ADP + H(+)</text>
        <dbReference type="Rhea" id="RHEA:10596"/>
        <dbReference type="Rhea" id="RHEA-COMP:10136"/>
        <dbReference type="Rhea" id="RHEA-COMP:20101"/>
        <dbReference type="ChEBI" id="CHEBI:15378"/>
        <dbReference type="ChEBI" id="CHEBI:30616"/>
        <dbReference type="ChEBI" id="CHEBI:46858"/>
        <dbReference type="ChEBI" id="CHEBI:61978"/>
        <dbReference type="ChEBI" id="CHEBI:456216"/>
        <dbReference type="EC" id="2.7.12.1"/>
    </reaction>
</comment>
<comment type="catalytic activity">
    <reaction evidence="1">
        <text>[DNA-directed RNA polymerase] + ATP = phospho-[DNA-directed RNA polymerase] + ADP + H(+)</text>
        <dbReference type="Rhea" id="RHEA:10216"/>
        <dbReference type="Rhea" id="RHEA-COMP:11321"/>
        <dbReference type="Rhea" id="RHEA-COMP:11322"/>
        <dbReference type="ChEBI" id="CHEBI:15378"/>
        <dbReference type="ChEBI" id="CHEBI:30616"/>
        <dbReference type="ChEBI" id="CHEBI:43176"/>
        <dbReference type="ChEBI" id="CHEBI:68546"/>
        <dbReference type="ChEBI" id="CHEBI:456216"/>
        <dbReference type="EC" id="2.7.11.23"/>
    </reaction>
    <physiologicalReaction direction="left-to-right" evidence="1">
        <dbReference type="Rhea" id="RHEA:10217"/>
    </physiologicalReaction>
</comment>
<comment type="subcellular location">
    <subcellularLocation>
        <location evidence="1">Nucleus</location>
    </subcellularLocation>
    <subcellularLocation>
        <location evidence="2">Nucleus speckle</location>
    </subcellularLocation>
</comment>
<comment type="induction">
    <text evidence="8">By insulin.</text>
</comment>
<comment type="domain">
    <text evidence="1">The histidine-rich domain (HRD) region is intrinsically disordered and promotes the formation of phase-separated liquid droplets that enhance its ability to phosphorylate the CTD (C-terminal domain) of the large subunit of RNA polymerase II (RNA Pol II).</text>
</comment>
<comment type="PTM">
    <text evidence="1">Autophosphorylated on tyrosine residues.</text>
</comment>
<comment type="similarity">
    <text evidence="9">Belongs to the protein kinase superfamily. CMGC Ser/Thr protein kinase family. MNB/DYRK subfamily.</text>
</comment>